<accession>Q9K9V4</accession>
<protein>
    <recommendedName>
        <fullName evidence="2">Bifunctional protein PyrR</fullName>
    </recommendedName>
    <domain>
        <recommendedName>
            <fullName evidence="2">Pyrimidine operon regulatory protein</fullName>
        </recommendedName>
    </domain>
    <domain>
        <recommendedName>
            <fullName evidence="2">Uracil phosphoribosyltransferase</fullName>
            <shortName evidence="2">UPRTase</shortName>
            <ecNumber evidence="2">2.4.2.9</ecNumber>
        </recommendedName>
    </domain>
</protein>
<comment type="function">
    <text evidence="2">Regulates transcriptional attenuation of the pyrimidine nucleotide (pyr) operon by binding in a uridine-dependent manner to specific sites on pyr mRNA. This disrupts an antiterminator hairpin in the RNA and favors formation of a downstream transcription terminator, leading to a reduced expression of downstream genes.</text>
</comment>
<comment type="function">
    <text evidence="2">Also displays a weak uracil phosphoribosyltransferase activity which is not physiologically significant.</text>
</comment>
<comment type="catalytic activity">
    <reaction evidence="2">
        <text>UMP + diphosphate = 5-phospho-alpha-D-ribose 1-diphosphate + uracil</text>
        <dbReference type="Rhea" id="RHEA:13017"/>
        <dbReference type="ChEBI" id="CHEBI:17568"/>
        <dbReference type="ChEBI" id="CHEBI:33019"/>
        <dbReference type="ChEBI" id="CHEBI:57865"/>
        <dbReference type="ChEBI" id="CHEBI:58017"/>
        <dbReference type="EC" id="2.4.2.9"/>
    </reaction>
</comment>
<comment type="subunit">
    <text evidence="2">Homodimer and homohexamer; in equilibrium.</text>
</comment>
<comment type="similarity">
    <text evidence="2">Belongs to the purine/pyrimidine phosphoribosyltransferase family. PyrR subfamily.</text>
</comment>
<dbReference type="EC" id="2.4.2.9" evidence="2"/>
<dbReference type="EMBL" id="BA000004">
    <property type="protein sequence ID" value="BAB06260.1"/>
    <property type="molecule type" value="Genomic_DNA"/>
</dbReference>
<dbReference type="PIR" id="E83967">
    <property type="entry name" value="E83967"/>
</dbReference>
<dbReference type="RefSeq" id="WP_010898692.1">
    <property type="nucleotide sequence ID" value="NC_002570.2"/>
</dbReference>
<dbReference type="SMR" id="Q9K9V4"/>
<dbReference type="STRING" id="272558.gene:10728439"/>
<dbReference type="GeneID" id="87598053"/>
<dbReference type="KEGG" id="bha:BH2541"/>
<dbReference type="eggNOG" id="COG2065">
    <property type="taxonomic scope" value="Bacteria"/>
</dbReference>
<dbReference type="HOGENOM" id="CLU_094234_2_1_9"/>
<dbReference type="OrthoDB" id="9802227at2"/>
<dbReference type="Proteomes" id="UP000001258">
    <property type="component" value="Chromosome"/>
</dbReference>
<dbReference type="GO" id="GO:0003723">
    <property type="term" value="F:RNA binding"/>
    <property type="evidence" value="ECO:0007669"/>
    <property type="project" value="UniProtKB-UniRule"/>
</dbReference>
<dbReference type="GO" id="GO:0004845">
    <property type="term" value="F:uracil phosphoribosyltransferase activity"/>
    <property type="evidence" value="ECO:0007669"/>
    <property type="project" value="UniProtKB-UniRule"/>
</dbReference>
<dbReference type="GO" id="GO:0006353">
    <property type="term" value="P:DNA-templated transcription termination"/>
    <property type="evidence" value="ECO:0007669"/>
    <property type="project" value="UniProtKB-UniRule"/>
</dbReference>
<dbReference type="CDD" id="cd06223">
    <property type="entry name" value="PRTases_typeI"/>
    <property type="match status" value="1"/>
</dbReference>
<dbReference type="FunFam" id="3.40.50.2020:FF:000020">
    <property type="entry name" value="Bifunctional protein PyrR"/>
    <property type="match status" value="1"/>
</dbReference>
<dbReference type="Gene3D" id="3.40.50.2020">
    <property type="match status" value="1"/>
</dbReference>
<dbReference type="HAMAP" id="MF_01219">
    <property type="entry name" value="PyrR"/>
    <property type="match status" value="1"/>
</dbReference>
<dbReference type="InterPro" id="IPR000836">
    <property type="entry name" value="PRibTrfase_dom"/>
</dbReference>
<dbReference type="InterPro" id="IPR029057">
    <property type="entry name" value="PRTase-like"/>
</dbReference>
<dbReference type="InterPro" id="IPR023050">
    <property type="entry name" value="PyrR"/>
</dbReference>
<dbReference type="InterPro" id="IPR050137">
    <property type="entry name" value="PyrR_bifunctional"/>
</dbReference>
<dbReference type="NCBIfam" id="NF003545">
    <property type="entry name" value="PRK05205.1-1"/>
    <property type="match status" value="1"/>
</dbReference>
<dbReference type="NCBIfam" id="NF003547">
    <property type="entry name" value="PRK05205.1-3"/>
    <property type="match status" value="1"/>
</dbReference>
<dbReference type="NCBIfam" id="NF003548">
    <property type="entry name" value="PRK05205.1-4"/>
    <property type="match status" value="1"/>
</dbReference>
<dbReference type="NCBIfam" id="NF003549">
    <property type="entry name" value="PRK05205.1-5"/>
    <property type="match status" value="1"/>
</dbReference>
<dbReference type="PANTHER" id="PTHR11608">
    <property type="entry name" value="BIFUNCTIONAL PROTEIN PYRR"/>
    <property type="match status" value="1"/>
</dbReference>
<dbReference type="PANTHER" id="PTHR11608:SF0">
    <property type="entry name" value="BIFUNCTIONAL PROTEIN PYRR"/>
    <property type="match status" value="1"/>
</dbReference>
<dbReference type="Pfam" id="PF00156">
    <property type="entry name" value="Pribosyltran"/>
    <property type="match status" value="1"/>
</dbReference>
<dbReference type="SUPFAM" id="SSF53271">
    <property type="entry name" value="PRTase-like"/>
    <property type="match status" value="1"/>
</dbReference>
<name>PYRR_HALH5</name>
<keyword id="KW-0328">Glycosyltransferase</keyword>
<keyword id="KW-1185">Reference proteome</keyword>
<keyword id="KW-0694">RNA-binding</keyword>
<keyword id="KW-0804">Transcription</keyword>
<keyword id="KW-0805">Transcription regulation</keyword>
<keyword id="KW-0806">Transcription termination</keyword>
<keyword id="KW-0808">Transferase</keyword>
<organism>
    <name type="scientific">Halalkalibacterium halodurans (strain ATCC BAA-125 / DSM 18197 / FERM 7344 / JCM 9153 / C-125)</name>
    <name type="common">Bacillus halodurans</name>
    <dbReference type="NCBI Taxonomy" id="272558"/>
    <lineage>
        <taxon>Bacteria</taxon>
        <taxon>Bacillati</taxon>
        <taxon>Bacillota</taxon>
        <taxon>Bacilli</taxon>
        <taxon>Bacillales</taxon>
        <taxon>Bacillaceae</taxon>
        <taxon>Halalkalibacterium (ex Joshi et al. 2022)</taxon>
    </lineage>
</organism>
<evidence type="ECO:0000250" key="1"/>
<evidence type="ECO:0000255" key="2">
    <source>
        <dbReference type="HAMAP-Rule" id="MF_01219"/>
    </source>
</evidence>
<gene>
    <name evidence="2" type="primary">pyrR</name>
    <name type="ordered locus">BH2541</name>
</gene>
<reference key="1">
    <citation type="journal article" date="2000" name="Nucleic Acids Res.">
        <title>Complete genome sequence of the alkaliphilic bacterium Bacillus halodurans and genomic sequence comparison with Bacillus subtilis.</title>
        <authorList>
            <person name="Takami H."/>
            <person name="Nakasone K."/>
            <person name="Takaki Y."/>
            <person name="Maeno G."/>
            <person name="Sasaki R."/>
            <person name="Masui N."/>
            <person name="Fuji F."/>
            <person name="Hirama C."/>
            <person name="Nakamura Y."/>
            <person name="Ogasawara N."/>
            <person name="Kuhara S."/>
            <person name="Horikoshi K."/>
        </authorList>
    </citation>
    <scope>NUCLEOTIDE SEQUENCE [LARGE SCALE GENOMIC DNA]</scope>
    <source>
        <strain>ATCC BAA-125 / DSM 18197 / FERM 7344 / JCM 9153 / C-125</strain>
    </source>
</reference>
<sequence length="180" mass="20107">MSRLILDEQAIRRATTRIAHEIIERNKGVSDCLLVGIKTRGIYLANRLQERIETIEGIKLPVGEVDITLYRDDLTVKSTTEEPILQGTDVPVDVTGKKVILIDDVLYTGRTVRAALDALMDLGRPEQIQLAVLIDRGHRELPIRPDYVGKNVPTSKQEQIVAKLSEVDGIDEVTIEQKTS</sequence>
<feature type="chain" id="PRO_0000183029" description="Bifunctional protein PyrR">
    <location>
        <begin position="1"/>
        <end position="180"/>
    </location>
</feature>
<feature type="short sequence motif" description="PRPP-binding" evidence="2">
    <location>
        <begin position="99"/>
        <end position="111"/>
    </location>
</feature>
<feature type="binding site" evidence="1">
    <location>
        <begin position="39"/>
        <end position="40"/>
    </location>
    <ligand>
        <name>substrate</name>
    </ligand>
</feature>
<feature type="binding site" evidence="1">
    <location>
        <begin position="103"/>
        <end position="111"/>
    </location>
    <ligand>
        <name>substrate</name>
    </ligand>
</feature>
<feature type="binding site" evidence="1">
    <location>
        <position position="136"/>
    </location>
    <ligand>
        <name>substrate</name>
    </ligand>
</feature>
<proteinExistence type="inferred from homology"/>